<reference key="1">
    <citation type="journal article" date="2013" name="Nature">
        <title>The zebrafish reference genome sequence and its relationship to the human genome.</title>
        <authorList>
            <person name="Howe K."/>
            <person name="Clark M.D."/>
            <person name="Torroja C.F."/>
            <person name="Torrance J."/>
            <person name="Berthelot C."/>
            <person name="Muffato M."/>
            <person name="Collins J.E."/>
            <person name="Humphray S."/>
            <person name="McLaren K."/>
            <person name="Matthews L."/>
            <person name="McLaren S."/>
            <person name="Sealy I."/>
            <person name="Caccamo M."/>
            <person name="Churcher C."/>
            <person name="Scott C."/>
            <person name="Barrett J.C."/>
            <person name="Koch R."/>
            <person name="Rauch G.J."/>
            <person name="White S."/>
            <person name="Chow W."/>
            <person name="Kilian B."/>
            <person name="Quintais L.T."/>
            <person name="Guerra-Assuncao J.A."/>
            <person name="Zhou Y."/>
            <person name="Gu Y."/>
            <person name="Yen J."/>
            <person name="Vogel J.H."/>
            <person name="Eyre T."/>
            <person name="Redmond S."/>
            <person name="Banerjee R."/>
            <person name="Chi J."/>
            <person name="Fu B."/>
            <person name="Langley E."/>
            <person name="Maguire S.F."/>
            <person name="Laird G.K."/>
            <person name="Lloyd D."/>
            <person name="Kenyon E."/>
            <person name="Donaldson S."/>
            <person name="Sehra H."/>
            <person name="Almeida-King J."/>
            <person name="Loveland J."/>
            <person name="Trevanion S."/>
            <person name="Jones M."/>
            <person name="Quail M."/>
            <person name="Willey D."/>
            <person name="Hunt A."/>
            <person name="Burton J."/>
            <person name="Sims S."/>
            <person name="McLay K."/>
            <person name="Plumb B."/>
            <person name="Davis J."/>
            <person name="Clee C."/>
            <person name="Oliver K."/>
            <person name="Clark R."/>
            <person name="Riddle C."/>
            <person name="Elliot D."/>
            <person name="Threadgold G."/>
            <person name="Harden G."/>
            <person name="Ware D."/>
            <person name="Begum S."/>
            <person name="Mortimore B."/>
            <person name="Kerry G."/>
            <person name="Heath P."/>
            <person name="Phillimore B."/>
            <person name="Tracey A."/>
            <person name="Corby N."/>
            <person name="Dunn M."/>
            <person name="Johnson C."/>
            <person name="Wood J."/>
            <person name="Clark S."/>
            <person name="Pelan S."/>
            <person name="Griffiths G."/>
            <person name="Smith M."/>
            <person name="Glithero R."/>
            <person name="Howden P."/>
            <person name="Barker N."/>
            <person name="Lloyd C."/>
            <person name="Stevens C."/>
            <person name="Harley J."/>
            <person name="Holt K."/>
            <person name="Panagiotidis G."/>
            <person name="Lovell J."/>
            <person name="Beasley H."/>
            <person name="Henderson C."/>
            <person name="Gordon D."/>
            <person name="Auger K."/>
            <person name="Wright D."/>
            <person name="Collins J."/>
            <person name="Raisen C."/>
            <person name="Dyer L."/>
            <person name="Leung K."/>
            <person name="Robertson L."/>
            <person name="Ambridge K."/>
            <person name="Leongamornlert D."/>
            <person name="McGuire S."/>
            <person name="Gilderthorp R."/>
            <person name="Griffiths C."/>
            <person name="Manthravadi D."/>
            <person name="Nichol S."/>
            <person name="Barker G."/>
            <person name="Whitehead S."/>
            <person name="Kay M."/>
            <person name="Brown J."/>
            <person name="Murnane C."/>
            <person name="Gray E."/>
            <person name="Humphries M."/>
            <person name="Sycamore N."/>
            <person name="Barker D."/>
            <person name="Saunders D."/>
            <person name="Wallis J."/>
            <person name="Babbage A."/>
            <person name="Hammond S."/>
            <person name="Mashreghi-Mohammadi M."/>
            <person name="Barr L."/>
            <person name="Martin S."/>
            <person name="Wray P."/>
            <person name="Ellington A."/>
            <person name="Matthews N."/>
            <person name="Ellwood M."/>
            <person name="Woodmansey R."/>
            <person name="Clark G."/>
            <person name="Cooper J."/>
            <person name="Tromans A."/>
            <person name="Grafham D."/>
            <person name="Skuce C."/>
            <person name="Pandian R."/>
            <person name="Andrews R."/>
            <person name="Harrison E."/>
            <person name="Kimberley A."/>
            <person name="Garnett J."/>
            <person name="Fosker N."/>
            <person name="Hall R."/>
            <person name="Garner P."/>
            <person name="Kelly D."/>
            <person name="Bird C."/>
            <person name="Palmer S."/>
            <person name="Gehring I."/>
            <person name="Berger A."/>
            <person name="Dooley C.M."/>
            <person name="Ersan-Urun Z."/>
            <person name="Eser C."/>
            <person name="Geiger H."/>
            <person name="Geisler M."/>
            <person name="Karotki L."/>
            <person name="Kirn A."/>
            <person name="Konantz J."/>
            <person name="Konantz M."/>
            <person name="Oberlander M."/>
            <person name="Rudolph-Geiger S."/>
            <person name="Teucke M."/>
            <person name="Lanz C."/>
            <person name="Raddatz G."/>
            <person name="Osoegawa K."/>
            <person name="Zhu B."/>
            <person name="Rapp A."/>
            <person name="Widaa S."/>
            <person name="Langford C."/>
            <person name="Yang F."/>
            <person name="Schuster S.C."/>
            <person name="Carter N.P."/>
            <person name="Harrow J."/>
            <person name="Ning Z."/>
            <person name="Herrero J."/>
            <person name="Searle S.M."/>
            <person name="Enright A."/>
            <person name="Geisler R."/>
            <person name="Plasterk R.H."/>
            <person name="Lee C."/>
            <person name="Westerfield M."/>
            <person name="de Jong P.J."/>
            <person name="Zon L.I."/>
            <person name="Postlethwait J.H."/>
            <person name="Nusslein-Volhard C."/>
            <person name="Hubbard T.J."/>
            <person name="Roest Crollius H."/>
            <person name="Rogers J."/>
            <person name="Stemple D.L."/>
        </authorList>
    </citation>
    <scope>NUCLEOTIDE SEQUENCE [LARGE SCALE GENOMIC DNA]</scope>
    <source>
        <strain>Tuebingen</strain>
    </source>
</reference>
<reference key="2">
    <citation type="submission" date="2006-09" db="EMBL/GenBank/DDBJ databases">
        <authorList>
            <consortium name="NIH - Zebrafish Gene Collection (ZGC) project"/>
        </authorList>
    </citation>
    <scope>NUCLEOTIDE SEQUENCE [LARGE SCALE MRNA]</scope>
    <source>
        <tissue>Skin</tissue>
    </source>
</reference>
<proteinExistence type="evidence at transcript level"/>
<keyword id="KW-0106">Calcium</keyword>
<keyword id="KW-0109">Calcium transport</keyword>
<keyword id="KW-0256">Endoplasmic reticulum</keyword>
<keyword id="KW-0406">Ion transport</keyword>
<keyword id="KW-0472">Membrane</keyword>
<keyword id="KW-1185">Reference proteome</keyword>
<keyword id="KW-0732">Signal</keyword>
<keyword id="KW-0812">Transmembrane</keyword>
<keyword id="KW-1133">Transmembrane helix</keyword>
<keyword id="KW-0813">Transport</keyword>
<protein>
    <recommendedName>
        <fullName>Store-operated calcium entry-associated regulatory factor</fullName>
        <shortName>SARAF</shortName>
        <shortName>SOCE-associated regulatory factor</shortName>
    </recommendedName>
    <alternativeName>
        <fullName>Transmembrane protein 66</fullName>
    </alternativeName>
</protein>
<dbReference type="EMBL" id="BX908747">
    <property type="status" value="NOT_ANNOTATED_CDS"/>
    <property type="molecule type" value="Genomic_DNA"/>
</dbReference>
<dbReference type="EMBL" id="BC124302">
    <property type="protein sequence ID" value="AAI24303.1"/>
    <property type="molecule type" value="mRNA"/>
</dbReference>
<dbReference type="RefSeq" id="NP_001070057.1">
    <property type="nucleotide sequence ID" value="NM_001076589.1"/>
</dbReference>
<dbReference type="SMR" id="F1QPC3"/>
<dbReference type="FunCoup" id="F1QPC3">
    <property type="interactions" value="16"/>
</dbReference>
<dbReference type="STRING" id="7955.ENSDARP00000115385"/>
<dbReference type="PaxDb" id="7955-ENSDARP00000115385"/>
<dbReference type="Ensembl" id="ENSDART00000103403">
    <property type="protein sequence ID" value="ENSDARP00000094179"/>
    <property type="gene ID" value="ENSDARG00000070452"/>
</dbReference>
<dbReference type="GeneID" id="767649"/>
<dbReference type="KEGG" id="dre:767649"/>
<dbReference type="AGR" id="ZFIN:ZDB-GENE-060929-208"/>
<dbReference type="CTD" id="51669"/>
<dbReference type="ZFIN" id="ZDB-GENE-060929-208">
    <property type="gene designation" value="saraf"/>
</dbReference>
<dbReference type="eggNOG" id="ENOG502QT6Y">
    <property type="taxonomic scope" value="Eukaryota"/>
</dbReference>
<dbReference type="HOGENOM" id="CLU_046802_0_1_1"/>
<dbReference type="InParanoid" id="F1QPC3"/>
<dbReference type="OrthoDB" id="20303at2759"/>
<dbReference type="TreeFam" id="TF314811"/>
<dbReference type="PRO" id="PR:F1QPC3"/>
<dbReference type="Proteomes" id="UP000000437">
    <property type="component" value="Chromosome 1"/>
</dbReference>
<dbReference type="Bgee" id="ENSDARG00000070452">
    <property type="expression patterns" value="Expressed in granulocyte and 26 other cell types or tissues"/>
</dbReference>
<dbReference type="ExpressionAtlas" id="F1QPC3">
    <property type="expression patterns" value="baseline and differential"/>
</dbReference>
<dbReference type="GO" id="GO:0005789">
    <property type="term" value="C:endoplasmic reticulum membrane"/>
    <property type="evidence" value="ECO:0000250"/>
    <property type="project" value="UniProtKB"/>
</dbReference>
<dbReference type="GO" id="GO:0140268">
    <property type="term" value="C:endoplasmic reticulum-plasma membrane contact site"/>
    <property type="evidence" value="ECO:0000250"/>
    <property type="project" value="UniProtKB"/>
</dbReference>
<dbReference type="GO" id="GO:0006816">
    <property type="term" value="P:calcium ion transport"/>
    <property type="evidence" value="ECO:0007669"/>
    <property type="project" value="UniProtKB-KW"/>
</dbReference>
<dbReference type="GO" id="GO:2001256">
    <property type="term" value="P:regulation of store-operated calcium entry"/>
    <property type="evidence" value="ECO:0000250"/>
    <property type="project" value="UniProtKB"/>
</dbReference>
<dbReference type="InterPro" id="IPR009567">
    <property type="entry name" value="SARAF"/>
</dbReference>
<dbReference type="PANTHER" id="PTHR15929">
    <property type="entry name" value="STORE-OPERATED CALCIUM ENTRY-ASSOCIATED REGULATORY FACTOR"/>
    <property type="match status" value="1"/>
</dbReference>
<dbReference type="PANTHER" id="PTHR15929:SF0">
    <property type="entry name" value="STORE-OPERATED CALCIUM ENTRY-ASSOCIATED REGULATORY FACTOR"/>
    <property type="match status" value="1"/>
</dbReference>
<dbReference type="Pfam" id="PF06682">
    <property type="entry name" value="SARAF"/>
    <property type="match status" value="1"/>
</dbReference>
<comment type="function">
    <text evidence="1">Negative regulator of store-operated Ca(2+) entry (SOCE) involved in protecting cells from Ca(2+) overfilling. In response to cytosolic Ca(2+) elevation after endoplasmic reticulum Ca(2+) refilling, promotes a slow inactivation of STIM (stim1 or stim2)-dependent SOCE activity (By similarity).</text>
</comment>
<comment type="subcellular location">
    <subcellularLocation>
        <location evidence="1">Endoplasmic reticulum membrane</location>
        <topology evidence="1">Single-pass type I membrane protein</topology>
    </subcellularLocation>
    <text evidence="1">Translocates to the endoplasmic reticulum-plasma membrane (ER-PM) region in a STIM1-dependent manner following cytosolic Ca(2+) elevation.</text>
</comment>
<comment type="similarity">
    <text evidence="4">Belongs to the SARAF family.</text>
</comment>
<sequence>MRVSGALFLQFLLLVVPHISCWNDEAVLLRDVQVLTLYRGRYTTARRSSPVPQLQCIGGSAGCGSFTPEVVQCYNRGSDGIDAQWECKADMDNLYRFGRVEVSCEGYNSPNDAYVLRGSCGLEYTLELTAEGKQQQGSSGFSGFASNFFQGFSNQKQQQRGGGGDGGGPYQQHSYQNSPSGDGVGGLLVVAFLLLVAFVVYKMFLCSPTNGHQGFGGDQGYDSTNGAWDNSQGMGPPPPGFKPDYYSGDHSNSRPGYGFSDSYTRPQSSWTGFTGRTRPGGGGGGGGGFWTGMGTGGILGYLFGNQRRQPPMGFAGPTYNSNPSPAPKTSSGTRTASGFGTTKRR</sequence>
<evidence type="ECO:0000250" key="1"/>
<evidence type="ECO:0000255" key="2"/>
<evidence type="ECO:0000256" key="3">
    <source>
        <dbReference type="SAM" id="MobiDB-lite"/>
    </source>
</evidence>
<evidence type="ECO:0000305" key="4"/>
<accession>F1QPC3</accession>
<accession>E9QGQ1</accession>
<accession>Q08CB8</accession>
<organism>
    <name type="scientific">Danio rerio</name>
    <name type="common">Zebrafish</name>
    <name type="synonym">Brachydanio rerio</name>
    <dbReference type="NCBI Taxonomy" id="7955"/>
    <lineage>
        <taxon>Eukaryota</taxon>
        <taxon>Metazoa</taxon>
        <taxon>Chordata</taxon>
        <taxon>Craniata</taxon>
        <taxon>Vertebrata</taxon>
        <taxon>Euteleostomi</taxon>
        <taxon>Actinopterygii</taxon>
        <taxon>Neopterygii</taxon>
        <taxon>Teleostei</taxon>
        <taxon>Ostariophysi</taxon>
        <taxon>Cypriniformes</taxon>
        <taxon>Danionidae</taxon>
        <taxon>Danioninae</taxon>
        <taxon>Danio</taxon>
    </lineage>
</organism>
<name>SARAF_DANRE</name>
<gene>
    <name type="primary">saraf</name>
    <name type="synonym">tmem66</name>
    <name type="ORF">zgc:153286</name>
</gene>
<feature type="signal peptide" evidence="2">
    <location>
        <begin position="1"/>
        <end position="21"/>
    </location>
</feature>
<feature type="chain" id="PRO_0000417516" description="Store-operated calcium entry-associated regulatory factor">
    <location>
        <begin position="22"/>
        <end position="345"/>
    </location>
</feature>
<feature type="topological domain" description="Lumenal" evidence="2">
    <location>
        <begin position="22"/>
        <end position="183"/>
    </location>
</feature>
<feature type="transmembrane region" description="Helical" evidence="2">
    <location>
        <begin position="184"/>
        <end position="204"/>
    </location>
</feature>
<feature type="topological domain" description="Cytoplasmic" evidence="2">
    <location>
        <begin position="205"/>
        <end position="345"/>
    </location>
</feature>
<feature type="region of interest" description="Disordered" evidence="3">
    <location>
        <begin position="155"/>
        <end position="178"/>
    </location>
</feature>
<feature type="region of interest" description="Disordered" evidence="3">
    <location>
        <begin position="223"/>
        <end position="289"/>
    </location>
</feature>
<feature type="region of interest" description="Disordered" evidence="3">
    <location>
        <begin position="302"/>
        <end position="345"/>
    </location>
</feature>
<feature type="compositionally biased region" description="Gly residues" evidence="3">
    <location>
        <begin position="160"/>
        <end position="169"/>
    </location>
</feature>
<feature type="compositionally biased region" description="Polar residues" evidence="3">
    <location>
        <begin position="223"/>
        <end position="233"/>
    </location>
</feature>
<feature type="compositionally biased region" description="Gly residues" evidence="3">
    <location>
        <begin position="278"/>
        <end position="289"/>
    </location>
</feature>
<feature type="compositionally biased region" description="Polar residues" evidence="3">
    <location>
        <begin position="318"/>
        <end position="345"/>
    </location>
</feature>
<feature type="sequence conflict" description="In Ref. 2; AAI24303." evidence="4" ref="2">
    <original>S</original>
    <variation>F</variation>
    <location>
        <position position="65"/>
    </location>
</feature>
<feature type="sequence conflict" description="In Ref. 2; AAI24303." evidence="4" ref="2">
    <original>D</original>
    <variation>G</variation>
    <location>
        <position position="165"/>
    </location>
</feature>
<feature type="sequence conflict" description="In Ref. 2; AAI24303." evidence="4" ref="2">
    <original>N</original>
    <variation>H</variation>
    <location>
        <position position="210"/>
    </location>
</feature>
<feature type="sequence conflict" description="In Ref. 2; AAI24303." evidence="4" ref="2">
    <original>R</original>
    <variation>G</variation>
    <location>
        <position position="276"/>
    </location>
</feature>